<name>IF172_RAT</name>
<comment type="function">
    <text evidence="1">Required for the maintenance and formation of cilia. Plays an indirect role in hedgehog (Hh) signaling, cilia being required for all activity of the hedgehog pathway (By similarity).</text>
</comment>
<comment type="subunit">
    <text evidence="1 2">Interacts with IFT88 (By similarity). Interacts with IFT57 (By similarity). Interacts with RABL2/RABL2A; binds preferentially to GDP-bound RABL2 (By similarity). May interact with LHX3 and LHX4; the relevance of such interaction is however unclear in vivo.</text>
</comment>
<comment type="subcellular location">
    <subcellularLocation>
        <location evidence="1">Cell projection</location>
        <location evidence="1">Cilium</location>
    </subcellularLocation>
    <subcellularLocation>
        <location evidence="4">Nucleus</location>
    </subcellularLocation>
</comment>
<comment type="tissue specificity">
    <text evidence="4">Highly expressed in the testis and pituitary cells.</text>
</comment>
<comment type="similarity">
    <text evidence="5">Belongs to the IFT172 family.</text>
</comment>
<keyword id="KW-0007">Acetylation</keyword>
<keyword id="KW-0966">Cell projection</keyword>
<keyword id="KW-0969">Cilium</keyword>
<keyword id="KW-0217">Developmental protein</keyword>
<keyword id="KW-1017">Isopeptide bond</keyword>
<keyword id="KW-0488">Methylation</keyword>
<keyword id="KW-0539">Nucleus</keyword>
<keyword id="KW-1185">Reference proteome</keyword>
<keyword id="KW-0677">Repeat</keyword>
<keyword id="KW-0802">TPR repeat</keyword>
<keyword id="KW-0832">Ubl conjugation</keyword>
<keyword id="KW-0853">WD repeat</keyword>
<protein>
    <recommendedName>
        <fullName>Intraflagellar transport protein 172 homolog</fullName>
    </recommendedName>
    <alternativeName>
        <fullName>Selective LIM-binding factor</fullName>
    </alternativeName>
</protein>
<dbReference type="EMBL" id="AF226993">
    <property type="protein sequence ID" value="AAF68274.1"/>
    <property type="molecule type" value="mRNA"/>
</dbReference>
<dbReference type="RefSeq" id="NP_446244.1">
    <property type="nucleotide sequence ID" value="NM_053792.1"/>
</dbReference>
<dbReference type="SMR" id="Q9JKU3"/>
<dbReference type="FunCoup" id="Q9JKU3">
    <property type="interactions" value="698"/>
</dbReference>
<dbReference type="STRING" id="10116.ENSRNOP00000070902"/>
<dbReference type="iPTMnet" id="Q9JKU3"/>
<dbReference type="PhosphoSitePlus" id="Q9JKU3"/>
<dbReference type="PaxDb" id="10116-ENSRNOP00000066409"/>
<dbReference type="GeneID" id="116475"/>
<dbReference type="KEGG" id="rno:116475"/>
<dbReference type="AGR" id="RGD:620744"/>
<dbReference type="CTD" id="26160"/>
<dbReference type="RGD" id="620744">
    <property type="gene designation" value="Ift172"/>
</dbReference>
<dbReference type="eggNOG" id="KOG3616">
    <property type="taxonomic scope" value="Eukaryota"/>
</dbReference>
<dbReference type="InParanoid" id="Q9JKU3"/>
<dbReference type="PhylomeDB" id="Q9JKU3"/>
<dbReference type="Reactome" id="R-RNO-5610787">
    <property type="pathway name" value="Hedgehog 'off' state"/>
</dbReference>
<dbReference type="Reactome" id="R-RNO-5620924">
    <property type="pathway name" value="Intraflagellar transport"/>
</dbReference>
<dbReference type="PRO" id="PR:Q9JKU3"/>
<dbReference type="Proteomes" id="UP000002494">
    <property type="component" value="Unplaced"/>
</dbReference>
<dbReference type="GO" id="GO:0005930">
    <property type="term" value="C:axoneme"/>
    <property type="evidence" value="ECO:0000318"/>
    <property type="project" value="GO_Central"/>
</dbReference>
<dbReference type="GO" id="GO:0036064">
    <property type="term" value="C:ciliary basal body"/>
    <property type="evidence" value="ECO:0000318"/>
    <property type="project" value="GO_Central"/>
</dbReference>
<dbReference type="GO" id="GO:0005929">
    <property type="term" value="C:cilium"/>
    <property type="evidence" value="ECO:0000250"/>
    <property type="project" value="UniProtKB"/>
</dbReference>
<dbReference type="GO" id="GO:0030992">
    <property type="term" value="C:intraciliary transport particle B"/>
    <property type="evidence" value="ECO:0000250"/>
    <property type="project" value="UniProtKB"/>
</dbReference>
<dbReference type="GO" id="GO:0005634">
    <property type="term" value="C:nucleus"/>
    <property type="evidence" value="ECO:0007669"/>
    <property type="project" value="UniProtKB-SubCell"/>
</dbReference>
<dbReference type="GO" id="GO:0097598">
    <property type="term" value="C:sperm cytoplasmic droplet"/>
    <property type="evidence" value="ECO:0000266"/>
    <property type="project" value="RGD"/>
</dbReference>
<dbReference type="GO" id="GO:0097225">
    <property type="term" value="C:sperm midpiece"/>
    <property type="evidence" value="ECO:0000266"/>
    <property type="project" value="RGD"/>
</dbReference>
<dbReference type="GO" id="GO:0097228">
    <property type="term" value="C:sperm principal piece"/>
    <property type="evidence" value="ECO:0000266"/>
    <property type="project" value="RGD"/>
</dbReference>
<dbReference type="GO" id="GO:0060348">
    <property type="term" value="P:bone development"/>
    <property type="evidence" value="ECO:0000266"/>
    <property type="project" value="RGD"/>
</dbReference>
<dbReference type="GO" id="GO:0007420">
    <property type="term" value="P:brain development"/>
    <property type="evidence" value="ECO:0000266"/>
    <property type="project" value="RGD"/>
</dbReference>
<dbReference type="GO" id="GO:0060271">
    <property type="term" value="P:cilium assembly"/>
    <property type="evidence" value="ECO:0000250"/>
    <property type="project" value="UniProtKB"/>
</dbReference>
<dbReference type="GO" id="GO:0031122">
    <property type="term" value="P:cytoplasmic microtubule organization"/>
    <property type="evidence" value="ECO:0000266"/>
    <property type="project" value="RGD"/>
</dbReference>
<dbReference type="GO" id="GO:0007368">
    <property type="term" value="P:determination of left/right symmetry"/>
    <property type="evidence" value="ECO:0000266"/>
    <property type="project" value="RGD"/>
</dbReference>
<dbReference type="GO" id="GO:0009953">
    <property type="term" value="P:dorsal/ventral pattern formation"/>
    <property type="evidence" value="ECO:0000266"/>
    <property type="project" value="RGD"/>
</dbReference>
<dbReference type="GO" id="GO:0048596">
    <property type="term" value="P:embryonic camera-type eye morphogenesis"/>
    <property type="evidence" value="ECO:0000266"/>
    <property type="project" value="RGD"/>
</dbReference>
<dbReference type="GO" id="GO:0008544">
    <property type="term" value="P:epidermis development"/>
    <property type="evidence" value="ECO:0000266"/>
    <property type="project" value="RGD"/>
</dbReference>
<dbReference type="GO" id="GO:0007507">
    <property type="term" value="P:heart development"/>
    <property type="evidence" value="ECO:0000266"/>
    <property type="project" value="RGD"/>
</dbReference>
<dbReference type="GO" id="GO:0001947">
    <property type="term" value="P:heart looping"/>
    <property type="evidence" value="ECO:0000266"/>
    <property type="project" value="RGD"/>
</dbReference>
<dbReference type="GO" id="GO:0061525">
    <property type="term" value="P:hindgut development"/>
    <property type="evidence" value="ECO:0000266"/>
    <property type="project" value="RGD"/>
</dbReference>
<dbReference type="GO" id="GO:0042073">
    <property type="term" value="P:intraciliary transport"/>
    <property type="evidence" value="ECO:0000318"/>
    <property type="project" value="GO_Central"/>
</dbReference>
<dbReference type="GO" id="GO:0043616">
    <property type="term" value="P:keratinocyte proliferation"/>
    <property type="evidence" value="ECO:0000266"/>
    <property type="project" value="RGD"/>
</dbReference>
<dbReference type="GO" id="GO:0070986">
    <property type="term" value="P:left/right axis specification"/>
    <property type="evidence" value="ECO:0000266"/>
    <property type="project" value="RGD"/>
</dbReference>
<dbReference type="GO" id="GO:0060173">
    <property type="term" value="P:limb development"/>
    <property type="evidence" value="ECO:0000266"/>
    <property type="project" value="RGD"/>
</dbReference>
<dbReference type="GO" id="GO:0050680">
    <property type="term" value="P:negative regulation of epithelial cell proliferation"/>
    <property type="evidence" value="ECO:0000266"/>
    <property type="project" value="RGD"/>
</dbReference>
<dbReference type="GO" id="GO:0010839">
    <property type="term" value="P:negative regulation of keratinocyte proliferation"/>
    <property type="evidence" value="ECO:0000266"/>
    <property type="project" value="RGD"/>
</dbReference>
<dbReference type="GO" id="GO:0045879">
    <property type="term" value="P:negative regulation of smoothened signaling pathway"/>
    <property type="evidence" value="ECO:0000266"/>
    <property type="project" value="RGD"/>
</dbReference>
<dbReference type="GO" id="GO:0000122">
    <property type="term" value="P:negative regulation of transcription by RNA polymerase II"/>
    <property type="evidence" value="ECO:0000315"/>
    <property type="project" value="RGD"/>
</dbReference>
<dbReference type="GO" id="GO:0001843">
    <property type="term" value="P:neural tube closure"/>
    <property type="evidence" value="ECO:0000266"/>
    <property type="project" value="RGD"/>
</dbReference>
<dbReference type="GO" id="GO:0021915">
    <property type="term" value="P:neural tube development"/>
    <property type="evidence" value="ECO:0000266"/>
    <property type="project" value="RGD"/>
</dbReference>
<dbReference type="GO" id="GO:0001841">
    <property type="term" value="P:neural tube formation"/>
    <property type="evidence" value="ECO:0000266"/>
    <property type="project" value="RGD"/>
</dbReference>
<dbReference type="GO" id="GO:1905515">
    <property type="term" value="P:non-motile cilium assembly"/>
    <property type="evidence" value="ECO:0000266"/>
    <property type="project" value="RGD"/>
</dbReference>
<dbReference type="GO" id="GO:0007219">
    <property type="term" value="P:Notch signaling pathway"/>
    <property type="evidence" value="ECO:0000266"/>
    <property type="project" value="RGD"/>
</dbReference>
<dbReference type="GO" id="GO:0045880">
    <property type="term" value="P:positive regulation of smoothened signaling pathway"/>
    <property type="evidence" value="ECO:0000266"/>
    <property type="project" value="RGD"/>
</dbReference>
<dbReference type="GO" id="GO:0016485">
    <property type="term" value="P:protein processing"/>
    <property type="evidence" value="ECO:0000266"/>
    <property type="project" value="RGD"/>
</dbReference>
<dbReference type="GO" id="GO:0008589">
    <property type="term" value="P:regulation of smoothened signaling pathway"/>
    <property type="evidence" value="ECO:0000266"/>
    <property type="project" value="RGD"/>
</dbReference>
<dbReference type="GO" id="GO:0060021">
    <property type="term" value="P:roof of mouth development"/>
    <property type="evidence" value="ECO:0000266"/>
    <property type="project" value="RGD"/>
</dbReference>
<dbReference type="GO" id="GO:0007224">
    <property type="term" value="P:smoothened signaling pathway"/>
    <property type="evidence" value="ECO:0000266"/>
    <property type="project" value="RGD"/>
</dbReference>
<dbReference type="GO" id="GO:0021522">
    <property type="term" value="P:spinal cord motor neuron differentiation"/>
    <property type="evidence" value="ECO:0000266"/>
    <property type="project" value="RGD"/>
</dbReference>
<dbReference type="FunFam" id="1.25.40.470:FF:000008">
    <property type="entry name" value="Intraflagellar transport protein 172 homolog"/>
    <property type="match status" value="1"/>
</dbReference>
<dbReference type="FunFam" id="1.25.40.470:FF:000012">
    <property type="entry name" value="intraflagellar transport protein 172 homolog"/>
    <property type="match status" value="1"/>
</dbReference>
<dbReference type="FunFam" id="1.25.40.470:FF:000013">
    <property type="entry name" value="intraflagellar transport protein 172 homolog"/>
    <property type="match status" value="1"/>
</dbReference>
<dbReference type="FunFam" id="2.130.10.10:FF:000345">
    <property type="entry name" value="intraflagellar transport protein 172 homolog"/>
    <property type="match status" value="1"/>
</dbReference>
<dbReference type="FunFam" id="2.130.10.10:FF:000387">
    <property type="entry name" value="intraflagellar transport protein 172 homolog"/>
    <property type="match status" value="1"/>
</dbReference>
<dbReference type="Gene3D" id="1.25.40.470">
    <property type="match status" value="2"/>
</dbReference>
<dbReference type="Gene3D" id="2.130.10.10">
    <property type="entry name" value="YVTN repeat-like/Quinoprotein amine dehydrogenase"/>
    <property type="match status" value="2"/>
</dbReference>
<dbReference type="InterPro" id="IPR016024">
    <property type="entry name" value="ARM-type_fold"/>
</dbReference>
<dbReference type="InterPro" id="IPR056168">
    <property type="entry name" value="TPR_IF140/IFT172/WDR19"/>
</dbReference>
<dbReference type="InterPro" id="IPR056157">
    <property type="entry name" value="TPR_IFT80_172_dom"/>
</dbReference>
<dbReference type="InterPro" id="IPR015943">
    <property type="entry name" value="WD40/YVTN_repeat-like_dom_sf"/>
</dbReference>
<dbReference type="InterPro" id="IPR036322">
    <property type="entry name" value="WD40_repeat_dom_sf"/>
</dbReference>
<dbReference type="InterPro" id="IPR001680">
    <property type="entry name" value="WD40_rpt"/>
</dbReference>
<dbReference type="PANTHER" id="PTHR15722">
    <property type="entry name" value="IFT140/172-RELATED"/>
    <property type="match status" value="1"/>
</dbReference>
<dbReference type="PANTHER" id="PTHR15722:SF2">
    <property type="entry name" value="INTRAFLAGELLAR TRANSPORT PROTEIN 172 HOMOLOG"/>
    <property type="match status" value="1"/>
</dbReference>
<dbReference type="Pfam" id="PF24762">
    <property type="entry name" value="TPR_IF140-IFT172"/>
    <property type="match status" value="1"/>
</dbReference>
<dbReference type="Pfam" id="PF23387">
    <property type="entry name" value="TPR_IFT80_172"/>
    <property type="match status" value="1"/>
</dbReference>
<dbReference type="Pfam" id="PF00400">
    <property type="entry name" value="WD40"/>
    <property type="match status" value="1"/>
</dbReference>
<dbReference type="SMART" id="SM00320">
    <property type="entry name" value="WD40"/>
    <property type="match status" value="7"/>
</dbReference>
<dbReference type="SUPFAM" id="SSF48371">
    <property type="entry name" value="ARM repeat"/>
    <property type="match status" value="1"/>
</dbReference>
<dbReference type="SUPFAM" id="SSF69322">
    <property type="entry name" value="Tricorn protease domain 2"/>
    <property type="match status" value="1"/>
</dbReference>
<dbReference type="SUPFAM" id="SSF50978">
    <property type="entry name" value="WD40 repeat-like"/>
    <property type="match status" value="1"/>
</dbReference>
<accession>Q9JKU3</accession>
<reference key="1">
    <citation type="journal article" date="2000" name="J. Biol. Chem.">
        <title>Identification of a conserved protein that interacts with specific LIM homeodomain transcription factors.</title>
        <authorList>
            <person name="Howard P.W."/>
            <person name="Maurer R.A."/>
        </authorList>
    </citation>
    <scope>NUCLEOTIDE SEQUENCE [MRNA]</scope>
    <scope>SUBCELLULAR LOCATION</scope>
    <scope>POSSIBLE INTERACTION WITH LHX3 AND LHX4</scope>
    <scope>TISSUE SPECIFICITY</scope>
</reference>
<sequence length="1749" mass="197603">MQLKHLRTLLSPQDGAAKVTCMAWSQNNAKFAVCTVDRVVLLYDEHGERRDKFSTKPADMKYGRKSYMVKGMAFSPDSTKIAIGQTDNIIYVYKIGEDWGDKKVICNKFIQTSAVTCLQWPAEYIIVFGLAEGKVRLANTKTNKSSTIYGTDSYVVALTTNCSGKGILSGHADGTIVRYFFDDEGSGESQGKLVNHPCPPYALAWATNSIVAAGCDRRIVAYGKEGHVLQTFDYSRDPQEREFTTAAASPGGQSVVLGSYDRLRVFNWSPRRSIWEEAKPKEIANLYTVTALAWKRDGSRLCAGTLCGGVEQFDCCLRRSIYKNKFELTYVGPSQLIVKNLSSGTRVVLKSHYGYEVEEVKILGKERYLVAHTSDTLLLGDLNTNRLSEIPWQGSGGNEKYFFENENVCMIFNAGELTLVEYGSNDSLGSVRTEFMNPHLISVRINERCQRGMEDNKKLAYLVDIKTIAIVDLIGGYNIGTISHESRVDWLELNETGHKLLFRDRKLRLHLYDIESCSKTMILNFCSYVQWVPGSDVLVAQNRNSLCVWYNIEAPERVTMSSIRGDVVGLERGGGKTEVMVTEGVTTVAYTLDEGLIEFGTAIDDGNYTRATAFLETLEMTPETEAMWKTLSKLALEARQLHTAERCFSALGHVAKARFLHETNEIADQVSREYGGEGTDFYQVRARLAMLEKNYKLAEMIFLEQNAVEEAMDMYQELHRWDECIAVAEAKGHPALEKLRRDYYQRLMDTQQEERAGELQESQGDGLAAISLYLKAGLPAKAARLVLTREELLANTELVEHITTALIKGELYERAGDLFEKIRNPQRALECYCKGNAFMKAVELARLAFPVEVVRLEEAWGDHLVQQKQLDAAINHYIEARCSIKAIEAALGARQWKKAIYILDLQDRNTASKYYPRVAQHYASLQEYEIAEELYTKGDRTKDAIDMYTQAGRWEQAHKLAMKCMRPEDVSVLYITQAQEMEKQGKYREAERLYVTVEEPDLAITMFKKHKLYDDMIRLVGKHHPDLLSDTHLHLGKELETEGRLQEAEYHYLEAQEWKATVNMYRSSGLWEEAYRVAKAHGGANAHKHVAYLWAKSLGGEAAVRLLNKLGLLEAAIDHAADNCSFEFAFELSRLALKHKTPEIHLRYAMYLEDEGKFEEAEAEFIRAGKPKEAVLMFVHNQDWEAAQRVAEAHDPDSVAEVLVGQARGALEEKDFQKAEGLLLRAQRPGLALNYYKEAGLWSDALRICKDYVPGQLEALQEEYEREATKKGGRGVEGLVEQARQWEQAGEYSRAVDCYLKVRDSGSSGLMEKCWMKAAELSIKFLPPQRSLEVVRVVGPQLIGIGKHSASAELYLNLDLVKEAIDAFIEGEEWNKAKRVAKELDPRYEDYVDQHYKEFLKNQGKVDSLVGVDVVAALDLYVEQGQWDKCIETATKQNYKILHKYVALYATHLIREGGYAQALALYVQHGAPANPQNFNIYKRIFTDMVSSPGTNNAEAYHSWADLRDVLFNLCENLVKSSEANSAAHEEFEMMLLIAHYYATRSAAQSIKQLETVAARLSVSLLRHTQLLPADKAFYEAGTAAKEVGWENMAFIFFNRFLDLTDAIEEGTLDALDHSDFQDTDIPFEVPLPAKQHVPEAQREEVRDWVLTVSMDQRLEQVLPRDERGVYEASLVAASTGVRALPCLITGYPILRNKIEFKRPGKAANKDNWNKFLMAIKTSHSPVCQDVLKFISQWCGGLPSTSFSFQ</sequence>
<proteinExistence type="evidence at protein level"/>
<evidence type="ECO:0000250" key="1"/>
<evidence type="ECO:0000250" key="2">
    <source>
        <dbReference type="UniProtKB" id="Q6VH22"/>
    </source>
</evidence>
<evidence type="ECO:0000250" key="3">
    <source>
        <dbReference type="UniProtKB" id="Q9UG01"/>
    </source>
</evidence>
<evidence type="ECO:0000269" key="4">
    <source>
    </source>
</evidence>
<evidence type="ECO:0000305" key="5"/>
<feature type="chain" id="PRO_0000328943" description="Intraflagellar transport protein 172 homolog">
    <location>
        <begin position="1"/>
        <end position="1749"/>
    </location>
</feature>
<feature type="repeat" description="WD 1">
    <location>
        <begin position="14"/>
        <end position="53"/>
    </location>
</feature>
<feature type="repeat" description="WD 2">
    <location>
        <begin position="64"/>
        <end position="103"/>
    </location>
</feature>
<feature type="repeat" description="WD 3">
    <location>
        <begin position="110"/>
        <end position="148"/>
    </location>
</feature>
<feature type="repeat" description="WD 4">
    <location>
        <begin position="150"/>
        <end position="191"/>
    </location>
</feature>
<feature type="repeat" description="WD 5">
    <location>
        <begin position="195"/>
        <end position="233"/>
    </location>
</feature>
<feature type="repeat" description="WD 6">
    <location>
        <begin position="238"/>
        <end position="278"/>
    </location>
</feature>
<feature type="repeat" description="WD 7">
    <location>
        <begin position="284"/>
        <end position="323"/>
    </location>
</feature>
<feature type="repeat" description="WD 8">
    <location>
        <begin position="483"/>
        <end position="520"/>
    </location>
</feature>
<feature type="repeat" description="WD 9">
    <location>
        <begin position="521"/>
        <end position="559"/>
    </location>
</feature>
<feature type="repeat" description="TPR 1">
    <location>
        <begin position="593"/>
        <end position="624"/>
    </location>
</feature>
<feature type="repeat" description="TPR 2">
    <location>
        <begin position="692"/>
        <end position="725"/>
    </location>
</feature>
<feature type="repeat" description="TPR 3">
    <location>
        <begin position="809"/>
        <end position="842"/>
    </location>
</feature>
<feature type="repeat" description="TPR 4">
    <location>
        <begin position="854"/>
        <end position="887"/>
    </location>
</feature>
<feature type="repeat" description="TPR 5">
    <location>
        <begin position="912"/>
        <end position="945"/>
    </location>
</feature>
<feature type="repeat" description="TPR 6">
    <location>
        <begin position="947"/>
        <end position="970"/>
    </location>
</feature>
<feature type="repeat" description="TPR 7">
    <location>
        <begin position="971"/>
        <end position="1004"/>
    </location>
</feature>
<feature type="repeat" description="TPR 8">
    <location>
        <begin position="1042"/>
        <end position="1075"/>
    </location>
</feature>
<feature type="repeat" description="TPR 9">
    <location>
        <begin position="1142"/>
        <end position="1175"/>
    </location>
</feature>
<feature type="repeat" description="TPR 10">
    <location>
        <begin position="1276"/>
        <end position="1309"/>
    </location>
</feature>
<feature type="repeat" description="TPR 11">
    <location>
        <begin position="1345"/>
        <end position="1378"/>
    </location>
</feature>
<feature type="repeat" description="TPR 12">
    <location>
        <begin position="1411"/>
        <end position="1445"/>
    </location>
</feature>
<feature type="repeat" description="TPR 13">
    <location>
        <begin position="1447"/>
        <end position="1477"/>
    </location>
</feature>
<feature type="repeat" description="TPR 14">
    <location>
        <begin position="1574"/>
        <end position="1607"/>
    </location>
</feature>
<feature type="modified residue" description="N-acetylmethionine" evidence="3">
    <location>
        <position position="1"/>
    </location>
</feature>
<feature type="modified residue" description="Omega-N-methylarginine" evidence="2">
    <location>
        <position position="672"/>
    </location>
</feature>
<feature type="cross-link" description="Glycyl lysine isopeptide (Lys-Gly) (interchain with G-Cter in SUMO1)" evidence="3">
    <location>
        <position position="4"/>
    </location>
</feature>
<organism>
    <name type="scientific">Rattus norvegicus</name>
    <name type="common">Rat</name>
    <dbReference type="NCBI Taxonomy" id="10116"/>
    <lineage>
        <taxon>Eukaryota</taxon>
        <taxon>Metazoa</taxon>
        <taxon>Chordata</taxon>
        <taxon>Craniata</taxon>
        <taxon>Vertebrata</taxon>
        <taxon>Euteleostomi</taxon>
        <taxon>Mammalia</taxon>
        <taxon>Eutheria</taxon>
        <taxon>Euarchontoglires</taxon>
        <taxon>Glires</taxon>
        <taxon>Rodentia</taxon>
        <taxon>Myomorpha</taxon>
        <taxon>Muroidea</taxon>
        <taxon>Muridae</taxon>
        <taxon>Murinae</taxon>
        <taxon>Rattus</taxon>
    </lineage>
</organism>
<gene>
    <name type="primary">Ift172</name>
    <name type="synonym">Slb</name>
</gene>